<gene>
    <name evidence="1" type="primary">hspQ</name>
    <name type="ordered locus">ECA1760</name>
</gene>
<comment type="function">
    <text evidence="1">Involved in the degradation of certain denaturated proteins, including DnaA, during heat shock stress.</text>
</comment>
<comment type="subcellular location">
    <subcellularLocation>
        <location evidence="1">Cytoplasm</location>
    </subcellularLocation>
</comment>
<comment type="similarity">
    <text evidence="1">Belongs to the HspQ family.</text>
</comment>
<accession>Q6D6C5</accession>
<reference key="1">
    <citation type="journal article" date="2004" name="Proc. Natl. Acad. Sci. U.S.A.">
        <title>Genome sequence of the enterobacterial phytopathogen Erwinia carotovora subsp. atroseptica and characterization of virulence factors.</title>
        <authorList>
            <person name="Bell K.S."/>
            <person name="Sebaihia M."/>
            <person name="Pritchard L."/>
            <person name="Holden M.T.G."/>
            <person name="Hyman L.J."/>
            <person name="Holeva M.C."/>
            <person name="Thomson N.R."/>
            <person name="Bentley S.D."/>
            <person name="Churcher L.J.C."/>
            <person name="Mungall K."/>
            <person name="Atkin R."/>
            <person name="Bason N."/>
            <person name="Brooks K."/>
            <person name="Chillingworth T."/>
            <person name="Clark K."/>
            <person name="Doggett J."/>
            <person name="Fraser A."/>
            <person name="Hance Z."/>
            <person name="Hauser H."/>
            <person name="Jagels K."/>
            <person name="Moule S."/>
            <person name="Norbertczak H."/>
            <person name="Ormond D."/>
            <person name="Price C."/>
            <person name="Quail M.A."/>
            <person name="Sanders M."/>
            <person name="Walker D."/>
            <person name="Whitehead S."/>
            <person name="Salmond G.P.C."/>
            <person name="Birch P.R.J."/>
            <person name="Parkhill J."/>
            <person name="Toth I.K."/>
        </authorList>
    </citation>
    <scope>NUCLEOTIDE SEQUENCE [LARGE SCALE GENOMIC DNA]</scope>
    <source>
        <strain>SCRI 1043 / ATCC BAA-672</strain>
    </source>
</reference>
<name>HSPQ_PECAS</name>
<evidence type="ECO:0000255" key="1">
    <source>
        <dbReference type="HAMAP-Rule" id="MF_01194"/>
    </source>
</evidence>
<feature type="chain" id="PRO_0000315303" description="Heat shock protein HspQ">
    <location>
        <begin position="1"/>
        <end position="102"/>
    </location>
</feature>
<sequence length="102" mass="11825">MIISKFGLGQQIRHKLLGFPGVIIDIDPEYSLETPTWEEISGNDTPRSEPWYHVVMEDNEGQPMHTYLAEAHLMKEELSEHDHPSLNELAEVIQRRAPQLRH</sequence>
<keyword id="KW-0963">Cytoplasm</keyword>
<keyword id="KW-1185">Reference proteome</keyword>
<keyword id="KW-0346">Stress response</keyword>
<organism>
    <name type="scientific">Pectobacterium atrosepticum (strain SCRI 1043 / ATCC BAA-672)</name>
    <name type="common">Erwinia carotovora subsp. atroseptica</name>
    <dbReference type="NCBI Taxonomy" id="218491"/>
    <lineage>
        <taxon>Bacteria</taxon>
        <taxon>Pseudomonadati</taxon>
        <taxon>Pseudomonadota</taxon>
        <taxon>Gammaproteobacteria</taxon>
        <taxon>Enterobacterales</taxon>
        <taxon>Pectobacteriaceae</taxon>
        <taxon>Pectobacterium</taxon>
    </lineage>
</organism>
<protein>
    <recommendedName>
        <fullName evidence="1">Heat shock protein HspQ</fullName>
    </recommendedName>
</protein>
<proteinExistence type="inferred from homology"/>
<dbReference type="EMBL" id="BX950851">
    <property type="protein sequence ID" value="CAG74665.1"/>
    <property type="molecule type" value="Genomic_DNA"/>
</dbReference>
<dbReference type="RefSeq" id="WP_011093336.1">
    <property type="nucleotide sequence ID" value="NC_004547.2"/>
</dbReference>
<dbReference type="SMR" id="Q6D6C5"/>
<dbReference type="STRING" id="218491.ECA1760"/>
<dbReference type="GeneID" id="57209527"/>
<dbReference type="KEGG" id="eca:ECA1760"/>
<dbReference type="PATRIC" id="fig|218491.5.peg.1787"/>
<dbReference type="eggNOG" id="COG3785">
    <property type="taxonomic scope" value="Bacteria"/>
</dbReference>
<dbReference type="HOGENOM" id="CLU_123865_1_0_6"/>
<dbReference type="OrthoDB" id="9806050at2"/>
<dbReference type="Proteomes" id="UP000007966">
    <property type="component" value="Chromosome"/>
</dbReference>
<dbReference type="GO" id="GO:0005737">
    <property type="term" value="C:cytoplasm"/>
    <property type="evidence" value="ECO:0007669"/>
    <property type="project" value="UniProtKB-SubCell"/>
</dbReference>
<dbReference type="GO" id="GO:0003677">
    <property type="term" value="F:DNA binding"/>
    <property type="evidence" value="ECO:0007669"/>
    <property type="project" value="InterPro"/>
</dbReference>
<dbReference type="GO" id="GO:0009408">
    <property type="term" value="P:response to heat"/>
    <property type="evidence" value="ECO:0007669"/>
    <property type="project" value="UniProtKB-UniRule"/>
</dbReference>
<dbReference type="Gene3D" id="2.30.30.390">
    <property type="entry name" value="Hemimethylated DNA-binding domain"/>
    <property type="match status" value="1"/>
</dbReference>
<dbReference type="HAMAP" id="MF_01194">
    <property type="entry name" value="HspQ"/>
    <property type="match status" value="1"/>
</dbReference>
<dbReference type="InterPro" id="IPR011722">
    <property type="entry name" value="Hemimethylated_DNA-bd_dom"/>
</dbReference>
<dbReference type="InterPro" id="IPR036623">
    <property type="entry name" value="Hemimethylated_DNA-bd_sf"/>
</dbReference>
<dbReference type="InterPro" id="IPR022866">
    <property type="entry name" value="HspQ"/>
</dbReference>
<dbReference type="NCBIfam" id="NF010729">
    <property type="entry name" value="PRK14129.1"/>
    <property type="match status" value="1"/>
</dbReference>
<dbReference type="NCBIfam" id="TIGR02097">
    <property type="entry name" value="yccV"/>
    <property type="match status" value="1"/>
</dbReference>
<dbReference type="Pfam" id="PF08755">
    <property type="entry name" value="YccV-like"/>
    <property type="match status" value="1"/>
</dbReference>
<dbReference type="SMART" id="SM00992">
    <property type="entry name" value="YccV-like"/>
    <property type="match status" value="1"/>
</dbReference>
<dbReference type="SUPFAM" id="SSF141255">
    <property type="entry name" value="YccV-like"/>
    <property type="match status" value="1"/>
</dbReference>